<organism>
    <name type="scientific">Polaromonas naphthalenivorans (strain CJ2)</name>
    <dbReference type="NCBI Taxonomy" id="365044"/>
    <lineage>
        <taxon>Bacteria</taxon>
        <taxon>Pseudomonadati</taxon>
        <taxon>Pseudomonadota</taxon>
        <taxon>Betaproteobacteria</taxon>
        <taxon>Burkholderiales</taxon>
        <taxon>Comamonadaceae</taxon>
        <taxon>Polaromonas</taxon>
    </lineage>
</organism>
<gene>
    <name evidence="1" type="primary">tatA</name>
    <name type="ordered locus">Pnap_0706</name>
</gene>
<dbReference type="EMBL" id="CP000529">
    <property type="protein sequence ID" value="ABM36025.1"/>
    <property type="molecule type" value="Genomic_DNA"/>
</dbReference>
<dbReference type="RefSeq" id="WP_011800120.1">
    <property type="nucleotide sequence ID" value="NC_008781.1"/>
</dbReference>
<dbReference type="SMR" id="A1VK47"/>
<dbReference type="STRING" id="365044.Pnap_0706"/>
<dbReference type="KEGG" id="pna:Pnap_0706"/>
<dbReference type="eggNOG" id="COG1826">
    <property type="taxonomic scope" value="Bacteria"/>
</dbReference>
<dbReference type="HOGENOM" id="CLU_086034_5_1_4"/>
<dbReference type="OrthoDB" id="7066617at2"/>
<dbReference type="Proteomes" id="UP000000644">
    <property type="component" value="Chromosome"/>
</dbReference>
<dbReference type="GO" id="GO:0033281">
    <property type="term" value="C:TAT protein transport complex"/>
    <property type="evidence" value="ECO:0007669"/>
    <property type="project" value="UniProtKB-UniRule"/>
</dbReference>
<dbReference type="GO" id="GO:0008320">
    <property type="term" value="F:protein transmembrane transporter activity"/>
    <property type="evidence" value="ECO:0007669"/>
    <property type="project" value="UniProtKB-UniRule"/>
</dbReference>
<dbReference type="GO" id="GO:0043953">
    <property type="term" value="P:protein transport by the Tat complex"/>
    <property type="evidence" value="ECO:0007669"/>
    <property type="project" value="UniProtKB-UniRule"/>
</dbReference>
<dbReference type="Gene3D" id="1.20.5.3310">
    <property type="match status" value="1"/>
</dbReference>
<dbReference type="HAMAP" id="MF_00236">
    <property type="entry name" value="TatA_E"/>
    <property type="match status" value="1"/>
</dbReference>
<dbReference type="InterPro" id="IPR003369">
    <property type="entry name" value="TatA/B/E"/>
</dbReference>
<dbReference type="InterPro" id="IPR006312">
    <property type="entry name" value="TatA/E"/>
</dbReference>
<dbReference type="NCBIfam" id="NF002813">
    <property type="entry name" value="PRK02958.1"/>
    <property type="match status" value="1"/>
</dbReference>
<dbReference type="NCBIfam" id="TIGR01411">
    <property type="entry name" value="tatAE"/>
    <property type="match status" value="1"/>
</dbReference>
<dbReference type="PANTHER" id="PTHR42982">
    <property type="entry name" value="SEC-INDEPENDENT PROTEIN TRANSLOCASE PROTEIN TATA"/>
    <property type="match status" value="1"/>
</dbReference>
<dbReference type="PANTHER" id="PTHR42982:SF1">
    <property type="entry name" value="SEC-INDEPENDENT PROTEIN TRANSLOCASE PROTEIN TATA"/>
    <property type="match status" value="1"/>
</dbReference>
<dbReference type="Pfam" id="PF02416">
    <property type="entry name" value="TatA_B_E"/>
    <property type="match status" value="1"/>
</dbReference>
<keyword id="KW-0997">Cell inner membrane</keyword>
<keyword id="KW-1003">Cell membrane</keyword>
<keyword id="KW-0472">Membrane</keyword>
<keyword id="KW-0653">Protein transport</keyword>
<keyword id="KW-1185">Reference proteome</keyword>
<keyword id="KW-0811">Translocation</keyword>
<keyword id="KW-0812">Transmembrane</keyword>
<keyword id="KW-1133">Transmembrane helix</keyword>
<keyword id="KW-0813">Transport</keyword>
<evidence type="ECO:0000255" key="1">
    <source>
        <dbReference type="HAMAP-Rule" id="MF_00236"/>
    </source>
</evidence>
<evidence type="ECO:0000256" key="2">
    <source>
        <dbReference type="SAM" id="MobiDB-lite"/>
    </source>
</evidence>
<feature type="chain" id="PRO_1000044418" description="Sec-independent protein translocase protein TatA">
    <location>
        <begin position="1"/>
        <end position="84"/>
    </location>
</feature>
<feature type="transmembrane region" description="Helical" evidence="1">
    <location>
        <begin position="1"/>
        <end position="21"/>
    </location>
</feature>
<feature type="region of interest" description="Disordered" evidence="2">
    <location>
        <begin position="40"/>
        <end position="84"/>
    </location>
</feature>
<feature type="compositionally biased region" description="Basic and acidic residues" evidence="2">
    <location>
        <begin position="69"/>
        <end position="84"/>
    </location>
</feature>
<protein>
    <recommendedName>
        <fullName evidence="1">Sec-independent protein translocase protein TatA</fullName>
    </recommendedName>
</protein>
<name>TATA_POLNA</name>
<proteinExistence type="inferred from homology"/>
<reference key="1">
    <citation type="journal article" date="2009" name="Environ. Microbiol.">
        <title>The genome of Polaromonas naphthalenivorans strain CJ2, isolated from coal tar-contaminated sediment, reveals physiological and metabolic versatility and evolution through extensive horizontal gene transfer.</title>
        <authorList>
            <person name="Yagi J.M."/>
            <person name="Sims D."/>
            <person name="Brettin T."/>
            <person name="Bruce D."/>
            <person name="Madsen E.L."/>
        </authorList>
    </citation>
    <scope>NUCLEOTIDE SEQUENCE [LARGE SCALE GENOMIC DNA]</scope>
    <source>
        <strain>CJ2</strain>
    </source>
</reference>
<sequence>MGGFSIWHWLIVLLIVVMVFGTKKLRNMGSDLGGAVKGFKDGMKDGGQSPADEKPVVPASQVTNAQAADKAERNTIDVEARQKS</sequence>
<comment type="function">
    <text evidence="1">Part of the twin-arginine translocation (Tat) system that transports large folded proteins containing a characteristic twin-arginine motif in their signal peptide across membranes. TatA could form the protein-conducting channel of the Tat system.</text>
</comment>
<comment type="subunit">
    <text evidence="1">The Tat system comprises two distinct complexes: a TatABC complex, containing multiple copies of TatA, TatB and TatC subunits, and a separate TatA complex, containing only TatA subunits. Substrates initially bind to the TatABC complex, which probably triggers association of the separate TatA complex to form the active translocon.</text>
</comment>
<comment type="subcellular location">
    <subcellularLocation>
        <location evidence="1">Cell inner membrane</location>
        <topology evidence="1">Single-pass membrane protein</topology>
    </subcellularLocation>
</comment>
<comment type="similarity">
    <text evidence="1">Belongs to the TatA/E family.</text>
</comment>
<accession>A1VK47</accession>